<protein>
    <recommendedName>
        <fullName evidence="1">Adenine phosphoribosyltransferase</fullName>
        <shortName evidence="1">APRT</shortName>
        <ecNumber evidence="1">2.4.2.7</ecNumber>
    </recommendedName>
</protein>
<reference key="1">
    <citation type="journal article" date="2011" name="Appl. Environ. Microbiol.">
        <title>Genomic potential of Marinobacter aquaeolei, a biogeochemical 'opportunitroph'.</title>
        <authorList>
            <person name="Singer E."/>
            <person name="Webb E.A."/>
            <person name="Nelson W.C."/>
            <person name="Heidelberg J.F."/>
            <person name="Ivanova N."/>
            <person name="Pati A."/>
            <person name="Edwards K.J."/>
        </authorList>
    </citation>
    <scope>NUCLEOTIDE SEQUENCE [LARGE SCALE GENOMIC DNA]</scope>
    <source>
        <strain>ATCC 700491 / DSM 11845 / VT8</strain>
    </source>
</reference>
<proteinExistence type="inferred from homology"/>
<dbReference type="EC" id="2.4.2.7" evidence="1"/>
<dbReference type="EMBL" id="CP000514">
    <property type="protein sequence ID" value="ABM19889.1"/>
    <property type="molecule type" value="Genomic_DNA"/>
</dbReference>
<dbReference type="RefSeq" id="WP_011786258.1">
    <property type="nucleotide sequence ID" value="NC_008740.1"/>
</dbReference>
<dbReference type="SMR" id="A1U4H0"/>
<dbReference type="STRING" id="351348.Maqu_2814"/>
<dbReference type="GeneID" id="31822092"/>
<dbReference type="KEGG" id="maq:Maqu_2814"/>
<dbReference type="eggNOG" id="COG0503">
    <property type="taxonomic scope" value="Bacteria"/>
</dbReference>
<dbReference type="HOGENOM" id="CLU_063339_3_0_6"/>
<dbReference type="OrthoDB" id="9803963at2"/>
<dbReference type="UniPathway" id="UPA00588">
    <property type="reaction ID" value="UER00646"/>
</dbReference>
<dbReference type="Proteomes" id="UP000000998">
    <property type="component" value="Chromosome"/>
</dbReference>
<dbReference type="GO" id="GO:0005737">
    <property type="term" value="C:cytoplasm"/>
    <property type="evidence" value="ECO:0007669"/>
    <property type="project" value="UniProtKB-SubCell"/>
</dbReference>
<dbReference type="GO" id="GO:0003999">
    <property type="term" value="F:adenine phosphoribosyltransferase activity"/>
    <property type="evidence" value="ECO:0007669"/>
    <property type="project" value="UniProtKB-UniRule"/>
</dbReference>
<dbReference type="GO" id="GO:0006168">
    <property type="term" value="P:adenine salvage"/>
    <property type="evidence" value="ECO:0007669"/>
    <property type="project" value="InterPro"/>
</dbReference>
<dbReference type="GO" id="GO:0044209">
    <property type="term" value="P:AMP salvage"/>
    <property type="evidence" value="ECO:0007669"/>
    <property type="project" value="UniProtKB-UniRule"/>
</dbReference>
<dbReference type="GO" id="GO:0006166">
    <property type="term" value="P:purine ribonucleoside salvage"/>
    <property type="evidence" value="ECO:0007669"/>
    <property type="project" value="UniProtKB-KW"/>
</dbReference>
<dbReference type="CDD" id="cd06223">
    <property type="entry name" value="PRTases_typeI"/>
    <property type="match status" value="1"/>
</dbReference>
<dbReference type="FunFam" id="3.40.50.2020:FF:000021">
    <property type="entry name" value="Adenine phosphoribosyltransferase"/>
    <property type="match status" value="1"/>
</dbReference>
<dbReference type="Gene3D" id="3.40.50.2020">
    <property type="match status" value="1"/>
</dbReference>
<dbReference type="HAMAP" id="MF_00004">
    <property type="entry name" value="Aden_phosphoribosyltr"/>
    <property type="match status" value="1"/>
</dbReference>
<dbReference type="InterPro" id="IPR005764">
    <property type="entry name" value="Ade_phspho_trans"/>
</dbReference>
<dbReference type="InterPro" id="IPR050120">
    <property type="entry name" value="Adenine_PRTase"/>
</dbReference>
<dbReference type="InterPro" id="IPR000836">
    <property type="entry name" value="PRibTrfase_dom"/>
</dbReference>
<dbReference type="InterPro" id="IPR029057">
    <property type="entry name" value="PRTase-like"/>
</dbReference>
<dbReference type="NCBIfam" id="TIGR01090">
    <property type="entry name" value="apt"/>
    <property type="match status" value="1"/>
</dbReference>
<dbReference type="NCBIfam" id="NF002634">
    <property type="entry name" value="PRK02304.1-3"/>
    <property type="match status" value="1"/>
</dbReference>
<dbReference type="NCBIfam" id="NF002636">
    <property type="entry name" value="PRK02304.1-5"/>
    <property type="match status" value="1"/>
</dbReference>
<dbReference type="PANTHER" id="PTHR11776">
    <property type="entry name" value="ADENINE PHOSPHORIBOSYLTRANSFERASE"/>
    <property type="match status" value="1"/>
</dbReference>
<dbReference type="PANTHER" id="PTHR11776:SF7">
    <property type="entry name" value="PHOSPHORIBOSYLTRANSFERASE DOMAIN-CONTAINING PROTEIN"/>
    <property type="match status" value="1"/>
</dbReference>
<dbReference type="Pfam" id="PF00156">
    <property type="entry name" value="Pribosyltran"/>
    <property type="match status" value="1"/>
</dbReference>
<dbReference type="SUPFAM" id="SSF53271">
    <property type="entry name" value="PRTase-like"/>
    <property type="match status" value="1"/>
</dbReference>
<dbReference type="PROSITE" id="PS00103">
    <property type="entry name" value="PUR_PYR_PR_TRANSFER"/>
    <property type="match status" value="1"/>
</dbReference>
<accession>A1U4H0</accession>
<name>APT_MARN8</name>
<evidence type="ECO:0000255" key="1">
    <source>
        <dbReference type="HAMAP-Rule" id="MF_00004"/>
    </source>
</evidence>
<sequence>MDYFSESIKKAIRTVPDWPKPGVSFRDITTVLQDKTAFRKLIDAFVHRYHGQHIDAVAAVDARGFIIGSALAYELNASLVLVRKKGKLPFDTLVEDYELEYGTASVELHEDAFKPGDKVILVDDLIATGGTMLAATRLIRRIGAEIVEVAAMIDLPDLGGSRKLQEEGLQVYTVCSFEGD</sequence>
<organism>
    <name type="scientific">Marinobacter nauticus (strain ATCC 700491 / DSM 11845 / VT8)</name>
    <name type="common">Marinobacter aquaeolei</name>
    <dbReference type="NCBI Taxonomy" id="351348"/>
    <lineage>
        <taxon>Bacteria</taxon>
        <taxon>Pseudomonadati</taxon>
        <taxon>Pseudomonadota</taxon>
        <taxon>Gammaproteobacteria</taxon>
        <taxon>Pseudomonadales</taxon>
        <taxon>Marinobacteraceae</taxon>
        <taxon>Marinobacter</taxon>
    </lineage>
</organism>
<comment type="function">
    <text evidence="1">Catalyzes a salvage reaction resulting in the formation of AMP, that is energically less costly than de novo synthesis.</text>
</comment>
<comment type="catalytic activity">
    <reaction evidence="1">
        <text>AMP + diphosphate = 5-phospho-alpha-D-ribose 1-diphosphate + adenine</text>
        <dbReference type="Rhea" id="RHEA:16609"/>
        <dbReference type="ChEBI" id="CHEBI:16708"/>
        <dbReference type="ChEBI" id="CHEBI:33019"/>
        <dbReference type="ChEBI" id="CHEBI:58017"/>
        <dbReference type="ChEBI" id="CHEBI:456215"/>
        <dbReference type="EC" id="2.4.2.7"/>
    </reaction>
</comment>
<comment type="pathway">
    <text evidence="1">Purine metabolism; AMP biosynthesis via salvage pathway; AMP from adenine: step 1/1.</text>
</comment>
<comment type="subunit">
    <text evidence="1">Homodimer.</text>
</comment>
<comment type="subcellular location">
    <subcellularLocation>
        <location evidence="1">Cytoplasm</location>
    </subcellularLocation>
</comment>
<comment type="similarity">
    <text evidence="1">Belongs to the purine/pyrimidine phosphoribosyltransferase family.</text>
</comment>
<gene>
    <name evidence="1" type="primary">apt</name>
    <name type="ordered locus">Maqu_2814</name>
</gene>
<keyword id="KW-0963">Cytoplasm</keyword>
<keyword id="KW-0328">Glycosyltransferase</keyword>
<keyword id="KW-0660">Purine salvage</keyword>
<keyword id="KW-0808">Transferase</keyword>
<feature type="chain" id="PRO_0000321368" description="Adenine phosphoribosyltransferase">
    <location>
        <begin position="1"/>
        <end position="180"/>
    </location>
</feature>